<proteinExistence type="inferred from homology"/>
<evidence type="ECO:0000256" key="1">
    <source>
        <dbReference type="SAM" id="MobiDB-lite"/>
    </source>
</evidence>
<evidence type="ECO:0000305" key="2"/>
<accession>P23455</accession>
<feature type="chain" id="PRO_0000180816" description="FlaA locus uncharacterized protein YlxG">
    <location>
        <begin position="1"/>
        <end position="140"/>
    </location>
</feature>
<feature type="region of interest" description="Disordered" evidence="1">
    <location>
        <begin position="1"/>
        <end position="21"/>
    </location>
</feature>
<keyword id="KW-1005">Bacterial flagellum biogenesis</keyword>
<keyword id="KW-1185">Reference proteome</keyword>
<sequence length="140" mass="15644">MTSISSEYKLPEKTNTVSTNNSSLGKDEFLKILMTQVQNQDPLNPIDDKEFISQMATFSSLEQMMNLNTTMTQFVENQDPFTTYVDWMGKEVSWTDGKSATDKTGTVSSVKHFKGNYYLVLDDGTEISPANVMSVGQSSK</sequence>
<reference key="1">
    <citation type="journal article" date="1991" name="J. Bacteriol.">
        <title>The flaA locus of Bacillus subtilis is part of a large operon coding for flagellar structures, motility functions, and an ATPase-like polypeptide.</title>
        <authorList>
            <person name="Albertini A.M."/>
            <person name="Caramori T."/>
            <person name="Crabb W.D."/>
            <person name="Scoffone F."/>
            <person name="Galizzi A."/>
        </authorList>
    </citation>
    <scope>NUCLEOTIDE SEQUENCE [GENOMIC DNA]</scope>
    <source>
        <strain>168</strain>
    </source>
</reference>
<reference key="2">
    <citation type="journal article" date="1997" name="Nature">
        <title>The complete genome sequence of the Gram-positive bacterium Bacillus subtilis.</title>
        <authorList>
            <person name="Kunst F."/>
            <person name="Ogasawara N."/>
            <person name="Moszer I."/>
            <person name="Albertini A.M."/>
            <person name="Alloni G."/>
            <person name="Azevedo V."/>
            <person name="Bertero M.G."/>
            <person name="Bessieres P."/>
            <person name="Bolotin A."/>
            <person name="Borchert S."/>
            <person name="Borriss R."/>
            <person name="Boursier L."/>
            <person name="Brans A."/>
            <person name="Braun M."/>
            <person name="Brignell S.C."/>
            <person name="Bron S."/>
            <person name="Brouillet S."/>
            <person name="Bruschi C.V."/>
            <person name="Caldwell B."/>
            <person name="Capuano V."/>
            <person name="Carter N.M."/>
            <person name="Choi S.-K."/>
            <person name="Codani J.-J."/>
            <person name="Connerton I.F."/>
            <person name="Cummings N.J."/>
            <person name="Daniel R.A."/>
            <person name="Denizot F."/>
            <person name="Devine K.M."/>
            <person name="Duesterhoeft A."/>
            <person name="Ehrlich S.D."/>
            <person name="Emmerson P.T."/>
            <person name="Entian K.-D."/>
            <person name="Errington J."/>
            <person name="Fabret C."/>
            <person name="Ferrari E."/>
            <person name="Foulger D."/>
            <person name="Fritz C."/>
            <person name="Fujita M."/>
            <person name="Fujita Y."/>
            <person name="Fuma S."/>
            <person name="Galizzi A."/>
            <person name="Galleron N."/>
            <person name="Ghim S.-Y."/>
            <person name="Glaser P."/>
            <person name="Goffeau A."/>
            <person name="Golightly E.J."/>
            <person name="Grandi G."/>
            <person name="Guiseppi G."/>
            <person name="Guy B.J."/>
            <person name="Haga K."/>
            <person name="Haiech J."/>
            <person name="Harwood C.R."/>
            <person name="Henaut A."/>
            <person name="Hilbert H."/>
            <person name="Holsappel S."/>
            <person name="Hosono S."/>
            <person name="Hullo M.-F."/>
            <person name="Itaya M."/>
            <person name="Jones L.-M."/>
            <person name="Joris B."/>
            <person name="Karamata D."/>
            <person name="Kasahara Y."/>
            <person name="Klaerr-Blanchard M."/>
            <person name="Klein C."/>
            <person name="Kobayashi Y."/>
            <person name="Koetter P."/>
            <person name="Koningstein G."/>
            <person name="Krogh S."/>
            <person name="Kumano M."/>
            <person name="Kurita K."/>
            <person name="Lapidus A."/>
            <person name="Lardinois S."/>
            <person name="Lauber J."/>
            <person name="Lazarevic V."/>
            <person name="Lee S.-M."/>
            <person name="Levine A."/>
            <person name="Liu H."/>
            <person name="Masuda S."/>
            <person name="Mauel C."/>
            <person name="Medigue C."/>
            <person name="Medina N."/>
            <person name="Mellado R.P."/>
            <person name="Mizuno M."/>
            <person name="Moestl D."/>
            <person name="Nakai S."/>
            <person name="Noback M."/>
            <person name="Noone D."/>
            <person name="O'Reilly M."/>
            <person name="Ogawa K."/>
            <person name="Ogiwara A."/>
            <person name="Oudega B."/>
            <person name="Park S.-H."/>
            <person name="Parro V."/>
            <person name="Pohl T.M."/>
            <person name="Portetelle D."/>
            <person name="Porwollik S."/>
            <person name="Prescott A.M."/>
            <person name="Presecan E."/>
            <person name="Pujic P."/>
            <person name="Purnelle B."/>
            <person name="Rapoport G."/>
            <person name="Rey M."/>
            <person name="Reynolds S."/>
            <person name="Rieger M."/>
            <person name="Rivolta C."/>
            <person name="Rocha E."/>
            <person name="Roche B."/>
            <person name="Rose M."/>
            <person name="Sadaie Y."/>
            <person name="Sato T."/>
            <person name="Scanlan E."/>
            <person name="Schleich S."/>
            <person name="Schroeter R."/>
            <person name="Scoffone F."/>
            <person name="Sekiguchi J."/>
            <person name="Sekowska A."/>
            <person name="Seror S.J."/>
            <person name="Serror P."/>
            <person name="Shin B.-S."/>
            <person name="Soldo B."/>
            <person name="Sorokin A."/>
            <person name="Tacconi E."/>
            <person name="Takagi T."/>
            <person name="Takahashi H."/>
            <person name="Takemaru K."/>
            <person name="Takeuchi M."/>
            <person name="Tamakoshi A."/>
            <person name="Tanaka T."/>
            <person name="Terpstra P."/>
            <person name="Tognoni A."/>
            <person name="Tosato V."/>
            <person name="Uchiyama S."/>
            <person name="Vandenbol M."/>
            <person name="Vannier F."/>
            <person name="Vassarotti A."/>
            <person name="Viari A."/>
            <person name="Wambutt R."/>
            <person name="Wedler E."/>
            <person name="Wedler H."/>
            <person name="Weitzenegger T."/>
            <person name="Winters P."/>
            <person name="Wipat A."/>
            <person name="Yamamoto H."/>
            <person name="Yamane K."/>
            <person name="Yasumoto K."/>
            <person name="Yata K."/>
            <person name="Yoshida K."/>
            <person name="Yoshikawa H.-F."/>
            <person name="Zumstein E."/>
            <person name="Yoshikawa H."/>
            <person name="Danchin A."/>
        </authorList>
    </citation>
    <scope>NUCLEOTIDE SEQUENCE [LARGE SCALE GENOMIC DNA]</scope>
    <source>
        <strain>168</strain>
    </source>
</reference>
<gene>
    <name type="primary">ylxG</name>
    <name type="ordered locus">BSU16280</name>
</gene>
<dbReference type="EMBL" id="X56049">
    <property type="protein sequence ID" value="CAA39527.1"/>
    <property type="molecule type" value="Genomic_DNA"/>
</dbReference>
<dbReference type="EMBL" id="AL009126">
    <property type="protein sequence ID" value="CAB13501.1"/>
    <property type="molecule type" value="Genomic_DNA"/>
</dbReference>
<dbReference type="PIR" id="H42365">
    <property type="entry name" value="H42365"/>
</dbReference>
<dbReference type="FunCoup" id="P23455">
    <property type="interactions" value="74"/>
</dbReference>
<dbReference type="STRING" id="224308.BSU16280"/>
<dbReference type="PaxDb" id="224308-BSU16280"/>
<dbReference type="DNASU" id="936501"/>
<dbReference type="EnsemblBacteria" id="CAB13501">
    <property type="protein sequence ID" value="CAB13501"/>
    <property type="gene ID" value="BSU_16280"/>
</dbReference>
<dbReference type="GeneID" id="936501"/>
<dbReference type="KEGG" id="bsu:BSU16280"/>
<dbReference type="PATRIC" id="fig|224308.179.peg.1768"/>
<dbReference type="eggNOG" id="COG1843">
    <property type="taxonomic scope" value="Bacteria"/>
</dbReference>
<dbReference type="InParanoid" id="P23455"/>
<dbReference type="OrthoDB" id="280334at2"/>
<dbReference type="PhylomeDB" id="P23455"/>
<dbReference type="BioCyc" id="BSUB:BSU16280-MONOMER"/>
<dbReference type="Proteomes" id="UP000001570">
    <property type="component" value="Chromosome"/>
</dbReference>
<dbReference type="GO" id="GO:0044781">
    <property type="term" value="P:bacterial-type flagellum organization"/>
    <property type="evidence" value="ECO:0007669"/>
    <property type="project" value="UniProtKB-KW"/>
</dbReference>
<dbReference type="GO" id="GO:0071978">
    <property type="term" value="P:bacterial-type flagellum-dependent swarming motility"/>
    <property type="evidence" value="ECO:0000315"/>
    <property type="project" value="CACAO"/>
</dbReference>
<dbReference type="InterPro" id="IPR005648">
    <property type="entry name" value="FlgD"/>
</dbReference>
<dbReference type="NCBIfam" id="NF007197">
    <property type="entry name" value="PRK09618.1"/>
    <property type="match status" value="1"/>
</dbReference>
<dbReference type="Pfam" id="PF03963">
    <property type="entry name" value="FlgD"/>
    <property type="match status" value="1"/>
</dbReference>
<comment type="similarity">
    <text evidence="2">Belongs to the FlgD family.</text>
</comment>
<name>YLXG_BACSU</name>
<protein>
    <recommendedName>
        <fullName>FlaA locus uncharacterized protein YlxG</fullName>
    </recommendedName>
    <alternativeName>
        <fullName>ORF 8</fullName>
    </alternativeName>
</protein>
<organism>
    <name type="scientific">Bacillus subtilis (strain 168)</name>
    <dbReference type="NCBI Taxonomy" id="224308"/>
    <lineage>
        <taxon>Bacteria</taxon>
        <taxon>Bacillati</taxon>
        <taxon>Bacillota</taxon>
        <taxon>Bacilli</taxon>
        <taxon>Bacillales</taxon>
        <taxon>Bacillaceae</taxon>
        <taxon>Bacillus</taxon>
    </lineage>
</organism>